<keyword id="KW-0067">ATP-binding</keyword>
<keyword id="KW-0436">Ligase</keyword>
<keyword id="KW-0460">Magnesium</keyword>
<keyword id="KW-0479">Metal-binding</keyword>
<keyword id="KW-0547">Nucleotide-binding</keyword>
<keyword id="KW-0816">Tricarboxylic acid cycle</keyword>
<protein>
    <recommendedName>
        <fullName evidence="1">Succinate--CoA ligase [ADP-forming] subunit beta</fullName>
        <ecNumber evidence="1">6.2.1.5</ecNumber>
    </recommendedName>
    <alternativeName>
        <fullName evidence="1">Succinyl-CoA synthetase subunit beta</fullName>
        <shortName evidence="1">SCS-beta</shortName>
    </alternativeName>
</protein>
<comment type="function">
    <text evidence="1">Succinyl-CoA synthetase functions in the citric acid cycle (TCA), coupling the hydrolysis of succinyl-CoA to the synthesis of either ATP or GTP and thus represents the only step of substrate-level phosphorylation in the TCA. The beta subunit provides nucleotide specificity of the enzyme and binds the substrate succinate, while the binding sites for coenzyme A and phosphate are found in the alpha subunit.</text>
</comment>
<comment type="catalytic activity">
    <reaction evidence="1">
        <text>succinate + ATP + CoA = succinyl-CoA + ADP + phosphate</text>
        <dbReference type="Rhea" id="RHEA:17661"/>
        <dbReference type="ChEBI" id="CHEBI:30031"/>
        <dbReference type="ChEBI" id="CHEBI:30616"/>
        <dbReference type="ChEBI" id="CHEBI:43474"/>
        <dbReference type="ChEBI" id="CHEBI:57287"/>
        <dbReference type="ChEBI" id="CHEBI:57292"/>
        <dbReference type="ChEBI" id="CHEBI:456216"/>
        <dbReference type="EC" id="6.2.1.5"/>
    </reaction>
    <physiologicalReaction direction="right-to-left" evidence="1">
        <dbReference type="Rhea" id="RHEA:17663"/>
    </physiologicalReaction>
</comment>
<comment type="catalytic activity">
    <reaction evidence="1">
        <text>GTP + succinate + CoA = succinyl-CoA + GDP + phosphate</text>
        <dbReference type="Rhea" id="RHEA:22120"/>
        <dbReference type="ChEBI" id="CHEBI:30031"/>
        <dbReference type="ChEBI" id="CHEBI:37565"/>
        <dbReference type="ChEBI" id="CHEBI:43474"/>
        <dbReference type="ChEBI" id="CHEBI:57287"/>
        <dbReference type="ChEBI" id="CHEBI:57292"/>
        <dbReference type="ChEBI" id="CHEBI:58189"/>
    </reaction>
    <physiologicalReaction direction="right-to-left" evidence="1">
        <dbReference type="Rhea" id="RHEA:22122"/>
    </physiologicalReaction>
</comment>
<comment type="cofactor">
    <cofactor evidence="1">
        <name>Mg(2+)</name>
        <dbReference type="ChEBI" id="CHEBI:18420"/>
    </cofactor>
    <text evidence="1">Binds 1 Mg(2+) ion per subunit.</text>
</comment>
<comment type="pathway">
    <text evidence="1">Carbohydrate metabolism; tricarboxylic acid cycle; succinate from succinyl-CoA (ligase route): step 1/1.</text>
</comment>
<comment type="subunit">
    <text evidence="1">Heterotetramer of two alpha and two beta subunits.</text>
</comment>
<comment type="similarity">
    <text evidence="1">Belongs to the succinate/malate CoA ligase beta subunit family.</text>
</comment>
<dbReference type="EC" id="6.2.1.5" evidence="1"/>
<dbReference type="EMBL" id="CP001215">
    <property type="protein sequence ID" value="ACP14630.1"/>
    <property type="molecule type" value="Genomic_DNA"/>
</dbReference>
<dbReference type="RefSeq" id="WP_001020786.1">
    <property type="nucleotide sequence ID" value="NC_012581.1"/>
</dbReference>
<dbReference type="SMR" id="C3L791"/>
<dbReference type="GeneID" id="45023664"/>
<dbReference type="KEGG" id="bah:BAMEG_0658"/>
<dbReference type="HOGENOM" id="CLU_037430_0_2_9"/>
<dbReference type="UniPathway" id="UPA00223">
    <property type="reaction ID" value="UER00999"/>
</dbReference>
<dbReference type="GO" id="GO:0005829">
    <property type="term" value="C:cytosol"/>
    <property type="evidence" value="ECO:0007669"/>
    <property type="project" value="TreeGrafter"/>
</dbReference>
<dbReference type="GO" id="GO:0042709">
    <property type="term" value="C:succinate-CoA ligase complex"/>
    <property type="evidence" value="ECO:0007669"/>
    <property type="project" value="TreeGrafter"/>
</dbReference>
<dbReference type="GO" id="GO:0005524">
    <property type="term" value="F:ATP binding"/>
    <property type="evidence" value="ECO:0007669"/>
    <property type="project" value="UniProtKB-UniRule"/>
</dbReference>
<dbReference type="GO" id="GO:0000287">
    <property type="term" value="F:magnesium ion binding"/>
    <property type="evidence" value="ECO:0007669"/>
    <property type="project" value="UniProtKB-UniRule"/>
</dbReference>
<dbReference type="GO" id="GO:0004775">
    <property type="term" value="F:succinate-CoA ligase (ADP-forming) activity"/>
    <property type="evidence" value="ECO:0007669"/>
    <property type="project" value="UniProtKB-UniRule"/>
</dbReference>
<dbReference type="GO" id="GO:0004776">
    <property type="term" value="F:succinate-CoA ligase (GDP-forming) activity"/>
    <property type="evidence" value="ECO:0007669"/>
    <property type="project" value="RHEA"/>
</dbReference>
<dbReference type="GO" id="GO:0006104">
    <property type="term" value="P:succinyl-CoA metabolic process"/>
    <property type="evidence" value="ECO:0007669"/>
    <property type="project" value="TreeGrafter"/>
</dbReference>
<dbReference type="GO" id="GO:0006099">
    <property type="term" value="P:tricarboxylic acid cycle"/>
    <property type="evidence" value="ECO:0007669"/>
    <property type="project" value="UniProtKB-UniRule"/>
</dbReference>
<dbReference type="FunFam" id="3.30.1490.20:FF:000002">
    <property type="entry name" value="Succinate--CoA ligase [ADP-forming] subunit beta"/>
    <property type="match status" value="1"/>
</dbReference>
<dbReference type="FunFam" id="3.30.470.20:FF:000002">
    <property type="entry name" value="Succinate--CoA ligase [ADP-forming] subunit beta"/>
    <property type="match status" value="1"/>
</dbReference>
<dbReference type="FunFam" id="3.40.50.261:FF:000001">
    <property type="entry name" value="Succinate--CoA ligase [ADP-forming] subunit beta"/>
    <property type="match status" value="1"/>
</dbReference>
<dbReference type="Gene3D" id="3.30.1490.20">
    <property type="entry name" value="ATP-grasp fold, A domain"/>
    <property type="match status" value="1"/>
</dbReference>
<dbReference type="Gene3D" id="3.30.470.20">
    <property type="entry name" value="ATP-grasp fold, B domain"/>
    <property type="match status" value="1"/>
</dbReference>
<dbReference type="Gene3D" id="3.40.50.261">
    <property type="entry name" value="Succinyl-CoA synthetase domains"/>
    <property type="match status" value="1"/>
</dbReference>
<dbReference type="HAMAP" id="MF_00558">
    <property type="entry name" value="Succ_CoA_beta"/>
    <property type="match status" value="1"/>
</dbReference>
<dbReference type="InterPro" id="IPR011761">
    <property type="entry name" value="ATP-grasp"/>
</dbReference>
<dbReference type="InterPro" id="IPR013650">
    <property type="entry name" value="ATP-grasp_succ-CoA_synth-type"/>
</dbReference>
<dbReference type="InterPro" id="IPR013815">
    <property type="entry name" value="ATP_grasp_subdomain_1"/>
</dbReference>
<dbReference type="InterPro" id="IPR005811">
    <property type="entry name" value="SUCC_ACL_C"/>
</dbReference>
<dbReference type="InterPro" id="IPR005809">
    <property type="entry name" value="Succ_CoA_ligase-like_bsu"/>
</dbReference>
<dbReference type="InterPro" id="IPR016102">
    <property type="entry name" value="Succinyl-CoA_synth-like"/>
</dbReference>
<dbReference type="NCBIfam" id="NF001913">
    <property type="entry name" value="PRK00696.1"/>
    <property type="match status" value="1"/>
</dbReference>
<dbReference type="NCBIfam" id="TIGR01016">
    <property type="entry name" value="sucCoAbeta"/>
    <property type="match status" value="1"/>
</dbReference>
<dbReference type="PANTHER" id="PTHR11815:SF10">
    <property type="entry name" value="SUCCINATE--COA LIGASE [GDP-FORMING] SUBUNIT BETA, MITOCHONDRIAL"/>
    <property type="match status" value="1"/>
</dbReference>
<dbReference type="PANTHER" id="PTHR11815">
    <property type="entry name" value="SUCCINYL-COA SYNTHETASE BETA CHAIN"/>
    <property type="match status" value="1"/>
</dbReference>
<dbReference type="Pfam" id="PF08442">
    <property type="entry name" value="ATP-grasp_2"/>
    <property type="match status" value="1"/>
</dbReference>
<dbReference type="Pfam" id="PF00549">
    <property type="entry name" value="Ligase_CoA"/>
    <property type="match status" value="1"/>
</dbReference>
<dbReference type="PIRSF" id="PIRSF001554">
    <property type="entry name" value="SucCS_beta"/>
    <property type="match status" value="1"/>
</dbReference>
<dbReference type="SUPFAM" id="SSF56059">
    <property type="entry name" value="Glutathione synthetase ATP-binding domain-like"/>
    <property type="match status" value="1"/>
</dbReference>
<dbReference type="SUPFAM" id="SSF52210">
    <property type="entry name" value="Succinyl-CoA synthetase domains"/>
    <property type="match status" value="1"/>
</dbReference>
<dbReference type="PROSITE" id="PS50975">
    <property type="entry name" value="ATP_GRASP"/>
    <property type="match status" value="1"/>
</dbReference>
<proteinExistence type="inferred from homology"/>
<evidence type="ECO:0000255" key="1">
    <source>
        <dbReference type="HAMAP-Rule" id="MF_00558"/>
    </source>
</evidence>
<sequence length="386" mass="41665">MNIHEYQGKAVLRSYGVSVPNGKVAFTVEEAVEAAKELGTDVCVVKAQIHAGGRGKAGGVKVAKNLDEVRTYAESILGTTLVTHQTGPEGKEVKRLLIEEGCDIKKEYYVGLVLDRATSQVVLMASEEGGTEIEEVAEKTPEKIFKEYIDPAVGLQGFQARRIAFNINIPKELVGQAVKFMMGLYRAFIEKDCSIAEINPLVTTGDGKVMALDAKLNFDSNALYRHKDILELRDLDEEDAKEIEASKYDLNYIPLDGNIGCMVNGAGLAMATMDIIKHYHGDPANFLDVGGGATAEKVTEAFKIILSDKNVKGIFVNIFGGIMKCDVIAEGVIEATKQVGLELPLVVRLEGTNVELGKKILNESGLNIVAAESMTDGAQKIVSLVG</sequence>
<accession>C3L791</accession>
<reference key="1">
    <citation type="submission" date="2008-10" db="EMBL/GenBank/DDBJ databases">
        <title>Genome sequence of Bacillus anthracis str. CDC 684.</title>
        <authorList>
            <person name="Dodson R.J."/>
            <person name="Munk A.C."/>
            <person name="Brettin T."/>
            <person name="Bruce D."/>
            <person name="Detter C."/>
            <person name="Tapia R."/>
            <person name="Han C."/>
            <person name="Sutton G."/>
            <person name="Sims D."/>
        </authorList>
    </citation>
    <scope>NUCLEOTIDE SEQUENCE [LARGE SCALE GENOMIC DNA]</scope>
    <source>
        <strain>CDC 684 / NRRL 3495</strain>
    </source>
</reference>
<feature type="chain" id="PRO_1000197695" description="Succinate--CoA ligase [ADP-forming] subunit beta">
    <location>
        <begin position="1"/>
        <end position="386"/>
    </location>
</feature>
<feature type="domain" description="ATP-grasp" evidence="1">
    <location>
        <begin position="9"/>
        <end position="244"/>
    </location>
</feature>
<feature type="binding site" evidence="1">
    <location>
        <position position="46"/>
    </location>
    <ligand>
        <name>ATP</name>
        <dbReference type="ChEBI" id="CHEBI:30616"/>
    </ligand>
</feature>
<feature type="binding site" evidence="1">
    <location>
        <begin position="53"/>
        <end position="55"/>
    </location>
    <ligand>
        <name>ATP</name>
        <dbReference type="ChEBI" id="CHEBI:30616"/>
    </ligand>
</feature>
<feature type="binding site" evidence="1">
    <location>
        <position position="99"/>
    </location>
    <ligand>
        <name>ATP</name>
        <dbReference type="ChEBI" id="CHEBI:30616"/>
    </ligand>
</feature>
<feature type="binding site" evidence="1">
    <location>
        <position position="102"/>
    </location>
    <ligand>
        <name>ATP</name>
        <dbReference type="ChEBI" id="CHEBI:30616"/>
    </ligand>
</feature>
<feature type="binding site" evidence="1">
    <location>
        <position position="107"/>
    </location>
    <ligand>
        <name>ATP</name>
        <dbReference type="ChEBI" id="CHEBI:30616"/>
    </ligand>
</feature>
<feature type="binding site" evidence="1">
    <location>
        <position position="199"/>
    </location>
    <ligand>
        <name>Mg(2+)</name>
        <dbReference type="ChEBI" id="CHEBI:18420"/>
    </ligand>
</feature>
<feature type="binding site" evidence="1">
    <location>
        <position position="213"/>
    </location>
    <ligand>
        <name>Mg(2+)</name>
        <dbReference type="ChEBI" id="CHEBI:18420"/>
    </ligand>
</feature>
<feature type="binding site" evidence="1">
    <location>
        <position position="264"/>
    </location>
    <ligand>
        <name>substrate</name>
        <note>ligand shared with subunit alpha</note>
    </ligand>
</feature>
<feature type="binding site" evidence="1">
    <location>
        <begin position="321"/>
        <end position="323"/>
    </location>
    <ligand>
        <name>substrate</name>
        <note>ligand shared with subunit alpha</note>
    </ligand>
</feature>
<name>SUCC_BACAC</name>
<organism>
    <name type="scientific">Bacillus anthracis (strain CDC 684 / NRRL 3495)</name>
    <dbReference type="NCBI Taxonomy" id="568206"/>
    <lineage>
        <taxon>Bacteria</taxon>
        <taxon>Bacillati</taxon>
        <taxon>Bacillota</taxon>
        <taxon>Bacilli</taxon>
        <taxon>Bacillales</taxon>
        <taxon>Bacillaceae</taxon>
        <taxon>Bacillus</taxon>
        <taxon>Bacillus cereus group</taxon>
    </lineage>
</organism>
<gene>
    <name evidence="1" type="primary">sucC</name>
    <name type="ordered locus">BAMEG_0658</name>
</gene>